<gene>
    <name evidence="1" type="primary">aspS</name>
    <name type="ordered locus">SBO_1189</name>
</gene>
<organism>
    <name type="scientific">Shigella boydii serotype 4 (strain Sb227)</name>
    <dbReference type="NCBI Taxonomy" id="300268"/>
    <lineage>
        <taxon>Bacteria</taxon>
        <taxon>Pseudomonadati</taxon>
        <taxon>Pseudomonadota</taxon>
        <taxon>Gammaproteobacteria</taxon>
        <taxon>Enterobacterales</taxon>
        <taxon>Enterobacteriaceae</taxon>
        <taxon>Shigella</taxon>
    </lineage>
</organism>
<dbReference type="EC" id="6.1.1.12" evidence="1"/>
<dbReference type="EMBL" id="CP000036">
    <property type="protein sequence ID" value="ABB65824.1"/>
    <property type="molecule type" value="Genomic_DNA"/>
</dbReference>
<dbReference type="RefSeq" id="WP_001258662.1">
    <property type="nucleotide sequence ID" value="NC_007613.1"/>
</dbReference>
<dbReference type="SMR" id="Q322D4"/>
<dbReference type="GeneID" id="75202728"/>
<dbReference type="KEGG" id="sbo:SBO_1189"/>
<dbReference type="HOGENOM" id="CLU_014330_3_2_6"/>
<dbReference type="Proteomes" id="UP000007067">
    <property type="component" value="Chromosome"/>
</dbReference>
<dbReference type="GO" id="GO:0005737">
    <property type="term" value="C:cytoplasm"/>
    <property type="evidence" value="ECO:0007669"/>
    <property type="project" value="UniProtKB-SubCell"/>
</dbReference>
<dbReference type="GO" id="GO:0004815">
    <property type="term" value="F:aspartate-tRNA ligase activity"/>
    <property type="evidence" value="ECO:0007669"/>
    <property type="project" value="UniProtKB-UniRule"/>
</dbReference>
<dbReference type="GO" id="GO:0005524">
    <property type="term" value="F:ATP binding"/>
    <property type="evidence" value="ECO:0007669"/>
    <property type="project" value="UniProtKB-UniRule"/>
</dbReference>
<dbReference type="GO" id="GO:0003676">
    <property type="term" value="F:nucleic acid binding"/>
    <property type="evidence" value="ECO:0007669"/>
    <property type="project" value="InterPro"/>
</dbReference>
<dbReference type="GO" id="GO:0006422">
    <property type="term" value="P:aspartyl-tRNA aminoacylation"/>
    <property type="evidence" value="ECO:0007669"/>
    <property type="project" value="UniProtKB-UniRule"/>
</dbReference>
<dbReference type="CDD" id="cd00777">
    <property type="entry name" value="AspRS_core"/>
    <property type="match status" value="1"/>
</dbReference>
<dbReference type="CDD" id="cd04317">
    <property type="entry name" value="EcAspRS_like_N"/>
    <property type="match status" value="1"/>
</dbReference>
<dbReference type="FunFam" id="2.40.50.140:FF:000080">
    <property type="entry name" value="Aspartate--tRNA ligase"/>
    <property type="match status" value="1"/>
</dbReference>
<dbReference type="FunFam" id="3.30.1360.30:FF:000001">
    <property type="entry name" value="Aspartate--tRNA ligase"/>
    <property type="match status" value="1"/>
</dbReference>
<dbReference type="Gene3D" id="3.30.930.10">
    <property type="entry name" value="Bira Bifunctional Protein, Domain 2"/>
    <property type="match status" value="1"/>
</dbReference>
<dbReference type="Gene3D" id="3.30.1360.30">
    <property type="entry name" value="GAD-like domain"/>
    <property type="match status" value="1"/>
</dbReference>
<dbReference type="Gene3D" id="2.40.50.140">
    <property type="entry name" value="Nucleic acid-binding proteins"/>
    <property type="match status" value="1"/>
</dbReference>
<dbReference type="HAMAP" id="MF_00044">
    <property type="entry name" value="Asp_tRNA_synth_type1"/>
    <property type="match status" value="1"/>
</dbReference>
<dbReference type="InterPro" id="IPR004364">
    <property type="entry name" value="Aa-tRNA-synt_II"/>
</dbReference>
<dbReference type="InterPro" id="IPR006195">
    <property type="entry name" value="aa-tRNA-synth_II"/>
</dbReference>
<dbReference type="InterPro" id="IPR045864">
    <property type="entry name" value="aa-tRNA-synth_II/BPL/LPL"/>
</dbReference>
<dbReference type="InterPro" id="IPR004524">
    <property type="entry name" value="Asp-tRNA-ligase_1"/>
</dbReference>
<dbReference type="InterPro" id="IPR047089">
    <property type="entry name" value="Asp-tRNA-ligase_1_N"/>
</dbReference>
<dbReference type="InterPro" id="IPR002312">
    <property type="entry name" value="Asp/Asn-tRNA-synth_IIb"/>
</dbReference>
<dbReference type="InterPro" id="IPR047090">
    <property type="entry name" value="AspRS_core"/>
</dbReference>
<dbReference type="InterPro" id="IPR004115">
    <property type="entry name" value="GAD-like_sf"/>
</dbReference>
<dbReference type="InterPro" id="IPR029351">
    <property type="entry name" value="GAD_dom"/>
</dbReference>
<dbReference type="InterPro" id="IPR012340">
    <property type="entry name" value="NA-bd_OB-fold"/>
</dbReference>
<dbReference type="InterPro" id="IPR004365">
    <property type="entry name" value="NA-bd_OB_tRNA"/>
</dbReference>
<dbReference type="NCBIfam" id="TIGR00459">
    <property type="entry name" value="aspS_bact"/>
    <property type="match status" value="1"/>
</dbReference>
<dbReference type="NCBIfam" id="NF001750">
    <property type="entry name" value="PRK00476.1"/>
    <property type="match status" value="1"/>
</dbReference>
<dbReference type="PANTHER" id="PTHR22594:SF5">
    <property type="entry name" value="ASPARTATE--TRNA LIGASE, MITOCHONDRIAL"/>
    <property type="match status" value="1"/>
</dbReference>
<dbReference type="PANTHER" id="PTHR22594">
    <property type="entry name" value="ASPARTYL/LYSYL-TRNA SYNTHETASE"/>
    <property type="match status" value="1"/>
</dbReference>
<dbReference type="Pfam" id="PF02938">
    <property type="entry name" value="GAD"/>
    <property type="match status" value="1"/>
</dbReference>
<dbReference type="Pfam" id="PF00152">
    <property type="entry name" value="tRNA-synt_2"/>
    <property type="match status" value="1"/>
</dbReference>
<dbReference type="Pfam" id="PF01336">
    <property type="entry name" value="tRNA_anti-codon"/>
    <property type="match status" value="1"/>
</dbReference>
<dbReference type="PRINTS" id="PR01042">
    <property type="entry name" value="TRNASYNTHASP"/>
</dbReference>
<dbReference type="SUPFAM" id="SSF55681">
    <property type="entry name" value="Class II aaRS and biotin synthetases"/>
    <property type="match status" value="1"/>
</dbReference>
<dbReference type="SUPFAM" id="SSF55261">
    <property type="entry name" value="GAD domain-like"/>
    <property type="match status" value="1"/>
</dbReference>
<dbReference type="SUPFAM" id="SSF50249">
    <property type="entry name" value="Nucleic acid-binding proteins"/>
    <property type="match status" value="1"/>
</dbReference>
<dbReference type="PROSITE" id="PS50862">
    <property type="entry name" value="AA_TRNA_LIGASE_II"/>
    <property type="match status" value="1"/>
</dbReference>
<accession>Q322D4</accession>
<reference key="1">
    <citation type="journal article" date="2005" name="Nucleic Acids Res.">
        <title>Genome dynamics and diversity of Shigella species, the etiologic agents of bacillary dysentery.</title>
        <authorList>
            <person name="Yang F."/>
            <person name="Yang J."/>
            <person name="Zhang X."/>
            <person name="Chen L."/>
            <person name="Jiang Y."/>
            <person name="Yan Y."/>
            <person name="Tang X."/>
            <person name="Wang J."/>
            <person name="Xiong Z."/>
            <person name="Dong J."/>
            <person name="Xue Y."/>
            <person name="Zhu Y."/>
            <person name="Xu X."/>
            <person name="Sun L."/>
            <person name="Chen S."/>
            <person name="Nie H."/>
            <person name="Peng J."/>
            <person name="Xu J."/>
            <person name="Wang Y."/>
            <person name="Yuan Z."/>
            <person name="Wen Y."/>
            <person name="Yao Z."/>
            <person name="Shen Y."/>
            <person name="Qiang B."/>
            <person name="Hou Y."/>
            <person name="Yu J."/>
            <person name="Jin Q."/>
        </authorList>
    </citation>
    <scope>NUCLEOTIDE SEQUENCE [LARGE SCALE GENOMIC DNA]</scope>
    <source>
        <strain>Sb227</strain>
    </source>
</reference>
<protein>
    <recommendedName>
        <fullName evidence="1">Aspartate--tRNA ligase</fullName>
        <ecNumber evidence="1">6.1.1.12</ecNumber>
    </recommendedName>
    <alternativeName>
        <fullName evidence="1">Aspartyl-tRNA synthetase</fullName>
        <shortName evidence="1">AspRS</shortName>
    </alternativeName>
</protein>
<proteinExistence type="inferred from homology"/>
<sequence length="590" mass="65869">MRTEYCGQLRLSHVGQQVTLCGWVNRRRDLGSLIFIDMRDREGIVQVFFDPDRADALKLASELRNEFCIQVTGTVRARDEKNINRDMATGEIEVLASSLTIINRADVLPLDSNHVNTEEARLKYRYLDLRRPEMAQRLKTRAKITSLVRRFMDDHGFLDIETPMLTKATPEGARDYLVPSRVHKGKFYALPQSPQLFKQLLMMSGFDRYYQIVKCFRDEDLRADRQPEFTQIDVETSFMTAPQVREVMEALVRHLWLEVKGVDLGDFPVMTFAEAERRYGSDKPDLRNPMELTDVADLLKSVEFAVFAGPANDPKGRVAALRVPGGASLTRKQIDEYGNFVKIYGAKGLAYIKVNERAKGLEGINSPVAKFLNAEIIEAILDRTAAQDGDMIFFGADNKKIVADAMGALRLKVGKDLGLTDESKWAPLWVIDFPMFEDDGEGGLTAMHHPFTSPKDMTAAELKAAPENAVANAYDMVINGYEVGGGSVRIHNGDMQQTVFGILGINEEEQREKFGFLLDALKYGTPPHAGLAFGLDRLTMLLTGTDNIRDVIAFPKTTAAACLMTEAPSFANPTALAELSIQVVKKAENN</sequence>
<comment type="function">
    <text evidence="1">Catalyzes the attachment of L-aspartate to tRNA(Asp) in a two-step reaction: L-aspartate is first activated by ATP to form Asp-AMP and then transferred to the acceptor end of tRNA(Asp).</text>
</comment>
<comment type="catalytic activity">
    <reaction evidence="1">
        <text>tRNA(Asp) + L-aspartate + ATP = L-aspartyl-tRNA(Asp) + AMP + diphosphate</text>
        <dbReference type="Rhea" id="RHEA:19649"/>
        <dbReference type="Rhea" id="RHEA-COMP:9660"/>
        <dbReference type="Rhea" id="RHEA-COMP:9678"/>
        <dbReference type="ChEBI" id="CHEBI:29991"/>
        <dbReference type="ChEBI" id="CHEBI:30616"/>
        <dbReference type="ChEBI" id="CHEBI:33019"/>
        <dbReference type="ChEBI" id="CHEBI:78442"/>
        <dbReference type="ChEBI" id="CHEBI:78516"/>
        <dbReference type="ChEBI" id="CHEBI:456215"/>
        <dbReference type="EC" id="6.1.1.12"/>
    </reaction>
</comment>
<comment type="subunit">
    <text evidence="1">Homodimer.</text>
</comment>
<comment type="subcellular location">
    <subcellularLocation>
        <location evidence="1">Cytoplasm</location>
    </subcellularLocation>
</comment>
<comment type="similarity">
    <text evidence="1">Belongs to the class-II aminoacyl-tRNA synthetase family. Type 1 subfamily.</text>
</comment>
<feature type="chain" id="PRO_0000235556" description="Aspartate--tRNA ligase">
    <location>
        <begin position="1"/>
        <end position="590"/>
    </location>
</feature>
<feature type="region of interest" description="Aspartate" evidence="1">
    <location>
        <begin position="195"/>
        <end position="198"/>
    </location>
</feature>
<feature type="binding site" evidence="1">
    <location>
        <position position="171"/>
    </location>
    <ligand>
        <name>L-aspartate</name>
        <dbReference type="ChEBI" id="CHEBI:29991"/>
    </ligand>
</feature>
<feature type="binding site" evidence="1">
    <location>
        <begin position="217"/>
        <end position="219"/>
    </location>
    <ligand>
        <name>ATP</name>
        <dbReference type="ChEBI" id="CHEBI:30616"/>
    </ligand>
</feature>
<feature type="binding site" evidence="1">
    <location>
        <position position="217"/>
    </location>
    <ligand>
        <name>L-aspartate</name>
        <dbReference type="ChEBI" id="CHEBI:29991"/>
    </ligand>
</feature>
<feature type="binding site" evidence="1">
    <location>
        <position position="226"/>
    </location>
    <ligand>
        <name>ATP</name>
        <dbReference type="ChEBI" id="CHEBI:30616"/>
    </ligand>
</feature>
<feature type="binding site" evidence="1">
    <location>
        <position position="448"/>
    </location>
    <ligand>
        <name>L-aspartate</name>
        <dbReference type="ChEBI" id="CHEBI:29991"/>
    </ligand>
</feature>
<feature type="binding site" evidence="1">
    <location>
        <position position="482"/>
    </location>
    <ligand>
        <name>ATP</name>
        <dbReference type="ChEBI" id="CHEBI:30616"/>
    </ligand>
</feature>
<feature type="binding site" evidence="1">
    <location>
        <position position="489"/>
    </location>
    <ligand>
        <name>L-aspartate</name>
        <dbReference type="ChEBI" id="CHEBI:29991"/>
    </ligand>
</feature>
<feature type="binding site" evidence="1">
    <location>
        <begin position="534"/>
        <end position="537"/>
    </location>
    <ligand>
        <name>ATP</name>
        <dbReference type="ChEBI" id="CHEBI:30616"/>
    </ligand>
</feature>
<evidence type="ECO:0000255" key="1">
    <source>
        <dbReference type="HAMAP-Rule" id="MF_00044"/>
    </source>
</evidence>
<keyword id="KW-0030">Aminoacyl-tRNA synthetase</keyword>
<keyword id="KW-0067">ATP-binding</keyword>
<keyword id="KW-0963">Cytoplasm</keyword>
<keyword id="KW-0436">Ligase</keyword>
<keyword id="KW-0547">Nucleotide-binding</keyword>
<keyword id="KW-0648">Protein biosynthesis</keyword>
<name>SYD_SHIBS</name>